<proteinExistence type="inferred from homology"/>
<evidence type="ECO:0000255" key="1">
    <source>
        <dbReference type="HAMAP-Rule" id="MF_00071"/>
    </source>
</evidence>
<name>LEPA_CUPTR</name>
<organism>
    <name type="scientific">Cupriavidus taiwanensis (strain DSM 17343 / BCRC 17206 / CCUG 44338 / CIP 107171 / LMG 19424 / R1)</name>
    <name type="common">Ralstonia taiwanensis (strain LMG 19424)</name>
    <dbReference type="NCBI Taxonomy" id="977880"/>
    <lineage>
        <taxon>Bacteria</taxon>
        <taxon>Pseudomonadati</taxon>
        <taxon>Pseudomonadota</taxon>
        <taxon>Betaproteobacteria</taxon>
        <taxon>Burkholderiales</taxon>
        <taxon>Burkholderiaceae</taxon>
        <taxon>Cupriavidus</taxon>
    </lineage>
</organism>
<gene>
    <name evidence="1" type="primary">lepA</name>
    <name type="ordered locus">RALTA_A2059</name>
</gene>
<dbReference type="EC" id="3.6.5.n1" evidence="1"/>
<dbReference type="EMBL" id="CU633749">
    <property type="protein sequence ID" value="CAQ69999.1"/>
    <property type="molecule type" value="Genomic_DNA"/>
</dbReference>
<dbReference type="RefSeq" id="WP_012353308.1">
    <property type="nucleotide sequence ID" value="NC_010528.1"/>
</dbReference>
<dbReference type="SMR" id="B3R202"/>
<dbReference type="GeneID" id="29762524"/>
<dbReference type="KEGG" id="cti:RALTA_A2059"/>
<dbReference type="eggNOG" id="COG0481">
    <property type="taxonomic scope" value="Bacteria"/>
</dbReference>
<dbReference type="HOGENOM" id="CLU_009995_3_3_4"/>
<dbReference type="BioCyc" id="CTAI977880:RALTA_RS10000-MONOMER"/>
<dbReference type="Proteomes" id="UP000001692">
    <property type="component" value="Chromosome 1"/>
</dbReference>
<dbReference type="GO" id="GO:0005886">
    <property type="term" value="C:plasma membrane"/>
    <property type="evidence" value="ECO:0007669"/>
    <property type="project" value="UniProtKB-SubCell"/>
</dbReference>
<dbReference type="GO" id="GO:0005525">
    <property type="term" value="F:GTP binding"/>
    <property type="evidence" value="ECO:0007669"/>
    <property type="project" value="UniProtKB-UniRule"/>
</dbReference>
<dbReference type="GO" id="GO:0003924">
    <property type="term" value="F:GTPase activity"/>
    <property type="evidence" value="ECO:0007669"/>
    <property type="project" value="UniProtKB-UniRule"/>
</dbReference>
<dbReference type="GO" id="GO:0097216">
    <property type="term" value="F:guanosine tetraphosphate binding"/>
    <property type="evidence" value="ECO:0007669"/>
    <property type="project" value="UniProtKB-ARBA"/>
</dbReference>
<dbReference type="GO" id="GO:0043022">
    <property type="term" value="F:ribosome binding"/>
    <property type="evidence" value="ECO:0007669"/>
    <property type="project" value="UniProtKB-UniRule"/>
</dbReference>
<dbReference type="GO" id="GO:0003746">
    <property type="term" value="F:translation elongation factor activity"/>
    <property type="evidence" value="ECO:0007669"/>
    <property type="project" value="UniProtKB-UniRule"/>
</dbReference>
<dbReference type="GO" id="GO:0045727">
    <property type="term" value="P:positive regulation of translation"/>
    <property type="evidence" value="ECO:0007669"/>
    <property type="project" value="UniProtKB-UniRule"/>
</dbReference>
<dbReference type="CDD" id="cd16260">
    <property type="entry name" value="EF4_III"/>
    <property type="match status" value="1"/>
</dbReference>
<dbReference type="CDD" id="cd01890">
    <property type="entry name" value="LepA"/>
    <property type="match status" value="1"/>
</dbReference>
<dbReference type="CDD" id="cd03709">
    <property type="entry name" value="lepA_C"/>
    <property type="match status" value="1"/>
</dbReference>
<dbReference type="FunFam" id="3.40.50.300:FF:000078">
    <property type="entry name" value="Elongation factor 4"/>
    <property type="match status" value="1"/>
</dbReference>
<dbReference type="FunFam" id="2.40.30.10:FF:000015">
    <property type="entry name" value="Translation factor GUF1, mitochondrial"/>
    <property type="match status" value="1"/>
</dbReference>
<dbReference type="FunFam" id="3.30.70.240:FF:000007">
    <property type="entry name" value="Translation factor GUF1, mitochondrial"/>
    <property type="match status" value="1"/>
</dbReference>
<dbReference type="FunFam" id="3.30.70.2570:FF:000001">
    <property type="entry name" value="Translation factor GUF1, mitochondrial"/>
    <property type="match status" value="1"/>
</dbReference>
<dbReference type="FunFam" id="3.30.70.870:FF:000004">
    <property type="entry name" value="Translation factor GUF1, mitochondrial"/>
    <property type="match status" value="1"/>
</dbReference>
<dbReference type="Gene3D" id="3.30.70.240">
    <property type="match status" value="1"/>
</dbReference>
<dbReference type="Gene3D" id="3.30.70.2570">
    <property type="entry name" value="Elongation factor 4, C-terminal domain"/>
    <property type="match status" value="1"/>
</dbReference>
<dbReference type="Gene3D" id="3.30.70.870">
    <property type="entry name" value="Elongation Factor G (Translational Gtpase), domain 3"/>
    <property type="match status" value="1"/>
</dbReference>
<dbReference type="Gene3D" id="3.40.50.300">
    <property type="entry name" value="P-loop containing nucleotide triphosphate hydrolases"/>
    <property type="match status" value="1"/>
</dbReference>
<dbReference type="Gene3D" id="2.40.30.10">
    <property type="entry name" value="Translation factors"/>
    <property type="match status" value="1"/>
</dbReference>
<dbReference type="HAMAP" id="MF_00071">
    <property type="entry name" value="LepA"/>
    <property type="match status" value="1"/>
</dbReference>
<dbReference type="InterPro" id="IPR006297">
    <property type="entry name" value="EF-4"/>
</dbReference>
<dbReference type="InterPro" id="IPR035647">
    <property type="entry name" value="EFG_III/V"/>
</dbReference>
<dbReference type="InterPro" id="IPR000640">
    <property type="entry name" value="EFG_V-like"/>
</dbReference>
<dbReference type="InterPro" id="IPR004161">
    <property type="entry name" value="EFTu-like_2"/>
</dbReference>
<dbReference type="InterPro" id="IPR031157">
    <property type="entry name" value="G_TR_CS"/>
</dbReference>
<dbReference type="InterPro" id="IPR038363">
    <property type="entry name" value="LepA_C_sf"/>
</dbReference>
<dbReference type="InterPro" id="IPR013842">
    <property type="entry name" value="LepA_CTD"/>
</dbReference>
<dbReference type="InterPro" id="IPR035654">
    <property type="entry name" value="LepA_IV"/>
</dbReference>
<dbReference type="InterPro" id="IPR027417">
    <property type="entry name" value="P-loop_NTPase"/>
</dbReference>
<dbReference type="InterPro" id="IPR005225">
    <property type="entry name" value="Small_GTP-bd"/>
</dbReference>
<dbReference type="InterPro" id="IPR000795">
    <property type="entry name" value="T_Tr_GTP-bd_dom"/>
</dbReference>
<dbReference type="InterPro" id="IPR009000">
    <property type="entry name" value="Transl_B-barrel_sf"/>
</dbReference>
<dbReference type="NCBIfam" id="TIGR01393">
    <property type="entry name" value="lepA"/>
    <property type="match status" value="1"/>
</dbReference>
<dbReference type="NCBIfam" id="TIGR00231">
    <property type="entry name" value="small_GTP"/>
    <property type="match status" value="1"/>
</dbReference>
<dbReference type="PANTHER" id="PTHR43512:SF4">
    <property type="entry name" value="TRANSLATION FACTOR GUF1 HOMOLOG, CHLOROPLASTIC"/>
    <property type="match status" value="1"/>
</dbReference>
<dbReference type="PANTHER" id="PTHR43512">
    <property type="entry name" value="TRANSLATION FACTOR GUF1-RELATED"/>
    <property type="match status" value="1"/>
</dbReference>
<dbReference type="Pfam" id="PF00679">
    <property type="entry name" value="EFG_C"/>
    <property type="match status" value="1"/>
</dbReference>
<dbReference type="Pfam" id="PF00009">
    <property type="entry name" value="GTP_EFTU"/>
    <property type="match status" value="1"/>
</dbReference>
<dbReference type="Pfam" id="PF03144">
    <property type="entry name" value="GTP_EFTU_D2"/>
    <property type="match status" value="1"/>
</dbReference>
<dbReference type="Pfam" id="PF06421">
    <property type="entry name" value="LepA_C"/>
    <property type="match status" value="1"/>
</dbReference>
<dbReference type="PRINTS" id="PR00315">
    <property type="entry name" value="ELONGATNFCT"/>
</dbReference>
<dbReference type="SMART" id="SM00838">
    <property type="entry name" value="EFG_C"/>
    <property type="match status" value="1"/>
</dbReference>
<dbReference type="SUPFAM" id="SSF54980">
    <property type="entry name" value="EF-G C-terminal domain-like"/>
    <property type="match status" value="2"/>
</dbReference>
<dbReference type="SUPFAM" id="SSF52540">
    <property type="entry name" value="P-loop containing nucleoside triphosphate hydrolases"/>
    <property type="match status" value="1"/>
</dbReference>
<dbReference type="SUPFAM" id="SSF50447">
    <property type="entry name" value="Translation proteins"/>
    <property type="match status" value="1"/>
</dbReference>
<dbReference type="PROSITE" id="PS00301">
    <property type="entry name" value="G_TR_1"/>
    <property type="match status" value="1"/>
</dbReference>
<dbReference type="PROSITE" id="PS51722">
    <property type="entry name" value="G_TR_2"/>
    <property type="match status" value="1"/>
</dbReference>
<feature type="chain" id="PRO_1000092390" description="Elongation factor 4">
    <location>
        <begin position="1"/>
        <end position="597"/>
    </location>
</feature>
<feature type="domain" description="tr-type G">
    <location>
        <begin position="2"/>
        <end position="184"/>
    </location>
</feature>
<feature type="binding site" evidence="1">
    <location>
        <begin position="14"/>
        <end position="19"/>
    </location>
    <ligand>
        <name>GTP</name>
        <dbReference type="ChEBI" id="CHEBI:37565"/>
    </ligand>
</feature>
<feature type="binding site" evidence="1">
    <location>
        <begin position="131"/>
        <end position="134"/>
    </location>
    <ligand>
        <name>GTP</name>
        <dbReference type="ChEBI" id="CHEBI:37565"/>
    </ligand>
</feature>
<reference key="1">
    <citation type="journal article" date="2008" name="Genome Res.">
        <title>Genome sequence of the beta-rhizobium Cupriavidus taiwanensis and comparative genomics of rhizobia.</title>
        <authorList>
            <person name="Amadou C."/>
            <person name="Pascal G."/>
            <person name="Mangenot S."/>
            <person name="Glew M."/>
            <person name="Bontemps C."/>
            <person name="Capela D."/>
            <person name="Carrere S."/>
            <person name="Cruveiller S."/>
            <person name="Dossat C."/>
            <person name="Lajus A."/>
            <person name="Marchetti M."/>
            <person name="Poinsot V."/>
            <person name="Rouy Z."/>
            <person name="Servin B."/>
            <person name="Saad M."/>
            <person name="Schenowitz C."/>
            <person name="Barbe V."/>
            <person name="Batut J."/>
            <person name="Medigue C."/>
            <person name="Masson-Boivin C."/>
        </authorList>
    </citation>
    <scope>NUCLEOTIDE SEQUENCE [LARGE SCALE GENOMIC DNA]</scope>
    <source>
        <strain>DSM 17343 / BCRC 17206 / CCUG 44338 / CIP 107171 / LMG 19424 / R1</strain>
    </source>
</reference>
<sequence>MDHIRNFSIIAHIDHGKSTLADRIIQLCGGLSDREMEAQVLDSMDIEKERGITIKAQTAALSYKARDGQVYNLNLIDTPGHVDFSYEVSRSLSACEGALLVVDASQGVEAQTVANCYTAIELGVEVVPVLNKIDLPQADPDNAIQEIEDVIGIDAQDATPCSAKTGQGVQDVIEALIAKVPPPKGDADAPLQALIIDSWFDNYVGVVMLVRVVNGTLRTKDKVLLMATGSQHLVEQVGVFTPKSIQRDALTAGQVGFVIAGIKELKAAKVGDTITTVQRKAEAPLPGFKEVKPQVFAGLYPVEANQYEALRESLEKLRLNDASLMFEPEVSQALGFGFRCGFLGLLHMEIVQERLEREFDMDLITTAPTVVYQVEMRDGTTVTVENPAKMPDPGKIEAILEPIVTVNLYMPQEYVGSVITLCTQKRGTQVNMSYHGKQVQLTYEIPMAEIVMDFFDRLKSVSRGYASMDYEFKEYRPSDVVKVDILINSDKVDALSVIVHRSNSQYRGREVAAKMREIIPRQMYDVAIQAAIGSNIIARENVKALRKNVLAKCYGGDISRKKKLLEKQKAGKKRMKQVGTVEIPQEAFLAILQVDDK</sequence>
<comment type="function">
    <text evidence="1">Required for accurate and efficient protein synthesis under certain stress conditions. May act as a fidelity factor of the translation reaction, by catalyzing a one-codon backward translocation of tRNAs on improperly translocated ribosomes. Back-translocation proceeds from a post-translocation (POST) complex to a pre-translocation (PRE) complex, thus giving elongation factor G a second chance to translocate the tRNAs correctly. Binds to ribosomes in a GTP-dependent manner.</text>
</comment>
<comment type="catalytic activity">
    <reaction evidence="1">
        <text>GTP + H2O = GDP + phosphate + H(+)</text>
        <dbReference type="Rhea" id="RHEA:19669"/>
        <dbReference type="ChEBI" id="CHEBI:15377"/>
        <dbReference type="ChEBI" id="CHEBI:15378"/>
        <dbReference type="ChEBI" id="CHEBI:37565"/>
        <dbReference type="ChEBI" id="CHEBI:43474"/>
        <dbReference type="ChEBI" id="CHEBI:58189"/>
        <dbReference type="EC" id="3.6.5.n1"/>
    </reaction>
</comment>
<comment type="subcellular location">
    <subcellularLocation>
        <location evidence="1">Cell inner membrane</location>
        <topology evidence="1">Peripheral membrane protein</topology>
        <orientation evidence="1">Cytoplasmic side</orientation>
    </subcellularLocation>
</comment>
<comment type="similarity">
    <text evidence="1">Belongs to the TRAFAC class translation factor GTPase superfamily. Classic translation factor GTPase family. LepA subfamily.</text>
</comment>
<protein>
    <recommendedName>
        <fullName evidence="1">Elongation factor 4</fullName>
        <shortName evidence="1">EF-4</shortName>
        <ecNumber evidence="1">3.6.5.n1</ecNumber>
    </recommendedName>
    <alternativeName>
        <fullName evidence="1">Ribosomal back-translocase LepA</fullName>
    </alternativeName>
</protein>
<accession>B3R202</accession>
<keyword id="KW-0997">Cell inner membrane</keyword>
<keyword id="KW-1003">Cell membrane</keyword>
<keyword id="KW-0342">GTP-binding</keyword>
<keyword id="KW-0378">Hydrolase</keyword>
<keyword id="KW-0472">Membrane</keyword>
<keyword id="KW-0547">Nucleotide-binding</keyword>
<keyword id="KW-0648">Protein biosynthesis</keyword>